<protein>
    <recommendedName>
        <fullName>Spore membrane assembly protein 2</fullName>
    </recommendedName>
</protein>
<keyword id="KW-0256">Endoplasmic reticulum</keyword>
<keyword id="KW-0472">Membrane</keyword>
<keyword id="KW-0749">Sporulation</keyword>
<keyword id="KW-0812">Transmembrane</keyword>
<keyword id="KW-1133">Transmembrane helix</keyword>
<proteinExistence type="inferred from homology"/>
<gene>
    <name type="primary">SMA2</name>
    <name type="ORF">SCY_4111</name>
</gene>
<evidence type="ECO:0000250" key="1"/>
<evidence type="ECO:0000255" key="2"/>
<evidence type="ECO:0000256" key="3">
    <source>
        <dbReference type="SAM" id="MobiDB-lite"/>
    </source>
</evidence>
<evidence type="ECO:0000305" key="4"/>
<feature type="chain" id="PRO_0000324504" description="Spore membrane assembly protein 2">
    <location>
        <begin position="1"/>
        <end position="369"/>
    </location>
</feature>
<feature type="topological domain" description="Cytoplasmic" evidence="2">
    <location>
        <begin position="1"/>
        <end position="6"/>
    </location>
</feature>
<feature type="transmembrane region" description="Helical" evidence="2">
    <location>
        <begin position="7"/>
        <end position="27"/>
    </location>
</feature>
<feature type="topological domain" description="Lumenal" evidence="2">
    <location>
        <begin position="28"/>
        <end position="220"/>
    </location>
</feature>
<feature type="transmembrane region" description="Helical" evidence="2">
    <location>
        <begin position="221"/>
        <end position="241"/>
    </location>
</feature>
<feature type="topological domain" description="Cytoplasmic" evidence="2">
    <location>
        <begin position="242"/>
        <end position="265"/>
    </location>
</feature>
<feature type="transmembrane region" description="Helical" evidence="2">
    <location>
        <begin position="266"/>
        <end position="286"/>
    </location>
</feature>
<feature type="topological domain" description="Lumenal" evidence="2">
    <location>
        <begin position="287"/>
        <end position="319"/>
    </location>
</feature>
<feature type="transmembrane region" description="Helical" evidence="2">
    <location>
        <begin position="320"/>
        <end position="340"/>
    </location>
</feature>
<feature type="topological domain" description="Cytoplasmic" evidence="2">
    <location>
        <begin position="341"/>
        <end position="369"/>
    </location>
</feature>
<feature type="region of interest" description="Disordered" evidence="3">
    <location>
        <begin position="348"/>
        <end position="369"/>
    </location>
</feature>
<sequence>MLFPKRLIVWGVLLILSLSQFVLYLPATTCTNSKGLRLCAPQFTITVIGGSSTANEFIASVREFLRLISYLTIDMGWSNEFTDPSVYEDENLVDTFQPDKVFELNYFGFCKRSNKSKVYCTSNENYGMDVLEVLVRDVGIQLGNISTTRSNETKKFGDSLVLTYRLALTSIRDFLKHDKHTGNALSKALIGSPDPNVKGASPTKNYLKGVNLAFILMMFNGMVFYFAVLEIIVGFLSICVVSAFGGALSVGKRHRLFPILLKSSSSILVVIATLTILCNIVYLIALKTLEPEEVTDVGSDNAAVHTTGWELLKVNVGSGFIMGLARYAIQWVLLVLAFLAANHYKAKPKKSDKYTEDTSNSPSPDLMEK</sequence>
<comment type="function">
    <text evidence="1">Involved in spore and ascus formation. Required for the efficient assembly of the precursors of the prospore membrane to a continuous prospore membrane (By similarity).</text>
</comment>
<comment type="subcellular location">
    <subcellularLocation>
        <location evidence="1">Prospore membrane</location>
        <topology evidence="1">Multi-pass membrane protein</topology>
    </subcellularLocation>
    <subcellularLocation>
        <location evidence="1">Endoplasmic reticulum</location>
    </subcellularLocation>
    <text evidence="1">Localizes to prospore membrane, and accumulates in the endoplasmic reticulum in vegetative and sporulating ERV14-deleted cells.</text>
</comment>
<comment type="similarity">
    <text evidence="4">Belongs to the SMA2 family.</text>
</comment>
<dbReference type="EMBL" id="AAFW02000020">
    <property type="protein sequence ID" value="EDN64329.1"/>
    <property type="molecule type" value="Genomic_DNA"/>
</dbReference>
<dbReference type="HOGENOM" id="CLU_776604_0_0_1"/>
<dbReference type="Proteomes" id="UP000007060">
    <property type="component" value="Unassembled WGS sequence"/>
</dbReference>
<dbReference type="GO" id="GO:0005783">
    <property type="term" value="C:endoplasmic reticulum"/>
    <property type="evidence" value="ECO:0007669"/>
    <property type="project" value="UniProtKB-SubCell"/>
</dbReference>
<dbReference type="GO" id="GO:0005628">
    <property type="term" value="C:prospore membrane"/>
    <property type="evidence" value="ECO:0007669"/>
    <property type="project" value="UniProtKB-SubCell"/>
</dbReference>
<dbReference type="GO" id="GO:0030435">
    <property type="term" value="P:sporulation resulting in formation of a cellular spore"/>
    <property type="evidence" value="ECO:0007669"/>
    <property type="project" value="UniProtKB-KW"/>
</dbReference>
<name>SMA2_YEAS7</name>
<accession>A6ZLZ9</accession>
<organism>
    <name type="scientific">Saccharomyces cerevisiae (strain YJM789)</name>
    <name type="common">Baker's yeast</name>
    <dbReference type="NCBI Taxonomy" id="307796"/>
    <lineage>
        <taxon>Eukaryota</taxon>
        <taxon>Fungi</taxon>
        <taxon>Dikarya</taxon>
        <taxon>Ascomycota</taxon>
        <taxon>Saccharomycotina</taxon>
        <taxon>Saccharomycetes</taxon>
        <taxon>Saccharomycetales</taxon>
        <taxon>Saccharomycetaceae</taxon>
        <taxon>Saccharomyces</taxon>
    </lineage>
</organism>
<reference key="1">
    <citation type="journal article" date="2007" name="Proc. Natl. Acad. Sci. U.S.A.">
        <title>Genome sequencing and comparative analysis of Saccharomyces cerevisiae strain YJM789.</title>
        <authorList>
            <person name="Wei W."/>
            <person name="McCusker J.H."/>
            <person name="Hyman R.W."/>
            <person name="Jones T."/>
            <person name="Ning Y."/>
            <person name="Cao Z."/>
            <person name="Gu Z."/>
            <person name="Bruno D."/>
            <person name="Miranda M."/>
            <person name="Nguyen M."/>
            <person name="Wilhelmy J."/>
            <person name="Komp C."/>
            <person name="Tamse R."/>
            <person name="Wang X."/>
            <person name="Jia P."/>
            <person name="Luedi P."/>
            <person name="Oefner P.J."/>
            <person name="David L."/>
            <person name="Dietrich F.S."/>
            <person name="Li Y."/>
            <person name="Davis R.W."/>
            <person name="Steinmetz L.M."/>
        </authorList>
    </citation>
    <scope>NUCLEOTIDE SEQUENCE [LARGE SCALE GENOMIC DNA]</scope>
    <source>
        <strain>YJM789</strain>
    </source>
</reference>